<accession>Q3IZI5</accession>
<sequence>MKLQLCAVGRLRSGPERDLVEDYLARFERTGRPLGLPPVQLLEFEDRKGGGMEAEADLIAKAVAPGAALVVLDERGRTLSSPEFADHLAHWRDSGRDVALAIGGADGLAPRLRDRADLAMSFGRMVWPHMLVRVMLAEQLYRAATILAGSPYHRV</sequence>
<proteinExistence type="inferred from homology"/>
<protein>
    <recommendedName>
        <fullName evidence="1">Ribosomal RNA large subunit methyltransferase H</fullName>
        <ecNumber evidence="1">2.1.1.177</ecNumber>
    </recommendedName>
    <alternativeName>
        <fullName evidence="1">23S rRNA (pseudouridine1915-N3)-methyltransferase</fullName>
    </alternativeName>
    <alternativeName>
        <fullName evidence="1">23S rRNA m3Psi1915 methyltransferase</fullName>
    </alternativeName>
    <alternativeName>
        <fullName evidence="1">rRNA (pseudouridine-N3-)-methyltransferase RlmH</fullName>
    </alternativeName>
</protein>
<gene>
    <name evidence="1" type="primary">rlmH</name>
    <name type="ordered locus">RHOS4_24810</name>
    <name type="ORF">RSP_0866</name>
</gene>
<evidence type="ECO:0000255" key="1">
    <source>
        <dbReference type="HAMAP-Rule" id="MF_00658"/>
    </source>
</evidence>
<keyword id="KW-0963">Cytoplasm</keyword>
<keyword id="KW-0489">Methyltransferase</keyword>
<keyword id="KW-1185">Reference proteome</keyword>
<keyword id="KW-0698">rRNA processing</keyword>
<keyword id="KW-0949">S-adenosyl-L-methionine</keyword>
<keyword id="KW-0808">Transferase</keyword>
<organism>
    <name type="scientific">Cereibacter sphaeroides (strain ATCC 17023 / DSM 158 / JCM 6121 / CCUG 31486 / LMG 2827 / NBRC 12203 / NCIMB 8253 / ATH 2.4.1.)</name>
    <name type="common">Rhodobacter sphaeroides</name>
    <dbReference type="NCBI Taxonomy" id="272943"/>
    <lineage>
        <taxon>Bacteria</taxon>
        <taxon>Pseudomonadati</taxon>
        <taxon>Pseudomonadota</taxon>
        <taxon>Alphaproteobacteria</taxon>
        <taxon>Rhodobacterales</taxon>
        <taxon>Paracoccaceae</taxon>
        <taxon>Cereibacter</taxon>
    </lineage>
</organism>
<dbReference type="EC" id="2.1.1.177" evidence="1"/>
<dbReference type="EMBL" id="CP000143">
    <property type="protein sequence ID" value="ABA80049.1"/>
    <property type="molecule type" value="Genomic_DNA"/>
</dbReference>
<dbReference type="RefSeq" id="WP_011338553.1">
    <property type="nucleotide sequence ID" value="NC_007493.2"/>
</dbReference>
<dbReference type="RefSeq" id="YP_353950.1">
    <property type="nucleotide sequence ID" value="NC_007493.2"/>
</dbReference>
<dbReference type="SMR" id="Q3IZI5"/>
<dbReference type="STRING" id="272943.RSP_0866"/>
<dbReference type="EnsemblBacteria" id="ABA80049">
    <property type="protein sequence ID" value="ABA80049"/>
    <property type="gene ID" value="RSP_0866"/>
</dbReference>
<dbReference type="GeneID" id="3718220"/>
<dbReference type="KEGG" id="rsp:RSP_0866"/>
<dbReference type="PATRIC" id="fig|272943.9.peg.2832"/>
<dbReference type="eggNOG" id="COG1576">
    <property type="taxonomic scope" value="Bacteria"/>
</dbReference>
<dbReference type="OrthoDB" id="9806643at2"/>
<dbReference type="PhylomeDB" id="Q3IZI5"/>
<dbReference type="Proteomes" id="UP000002703">
    <property type="component" value="Chromosome 1"/>
</dbReference>
<dbReference type="GO" id="GO:0005737">
    <property type="term" value="C:cytoplasm"/>
    <property type="evidence" value="ECO:0007669"/>
    <property type="project" value="UniProtKB-SubCell"/>
</dbReference>
<dbReference type="GO" id="GO:0070038">
    <property type="term" value="F:rRNA (pseudouridine-N3-)-methyltransferase activity"/>
    <property type="evidence" value="ECO:0007669"/>
    <property type="project" value="UniProtKB-UniRule"/>
</dbReference>
<dbReference type="CDD" id="cd18081">
    <property type="entry name" value="RlmH-like"/>
    <property type="match status" value="1"/>
</dbReference>
<dbReference type="Gene3D" id="3.40.1280.10">
    <property type="match status" value="1"/>
</dbReference>
<dbReference type="HAMAP" id="MF_00658">
    <property type="entry name" value="23SrRNA_methyltr_H"/>
    <property type="match status" value="1"/>
</dbReference>
<dbReference type="InterPro" id="IPR029028">
    <property type="entry name" value="Alpha/beta_knot_MTases"/>
</dbReference>
<dbReference type="InterPro" id="IPR003742">
    <property type="entry name" value="RlmH-like"/>
</dbReference>
<dbReference type="InterPro" id="IPR029026">
    <property type="entry name" value="tRNA_m1G_MTases_N"/>
</dbReference>
<dbReference type="NCBIfam" id="NF000988">
    <property type="entry name" value="PRK00103.2-2"/>
    <property type="match status" value="1"/>
</dbReference>
<dbReference type="NCBIfam" id="NF000989">
    <property type="entry name" value="PRK00103.2-3"/>
    <property type="match status" value="1"/>
</dbReference>
<dbReference type="PANTHER" id="PTHR33603">
    <property type="entry name" value="METHYLTRANSFERASE"/>
    <property type="match status" value="1"/>
</dbReference>
<dbReference type="PANTHER" id="PTHR33603:SF1">
    <property type="entry name" value="RIBOSOMAL RNA LARGE SUBUNIT METHYLTRANSFERASE H"/>
    <property type="match status" value="1"/>
</dbReference>
<dbReference type="Pfam" id="PF02590">
    <property type="entry name" value="SPOUT_MTase"/>
    <property type="match status" value="1"/>
</dbReference>
<dbReference type="PIRSF" id="PIRSF004505">
    <property type="entry name" value="MT_bac"/>
    <property type="match status" value="1"/>
</dbReference>
<dbReference type="SUPFAM" id="SSF75217">
    <property type="entry name" value="alpha/beta knot"/>
    <property type="match status" value="1"/>
</dbReference>
<reference key="1">
    <citation type="submission" date="2005-09" db="EMBL/GenBank/DDBJ databases">
        <title>Complete sequence of chromosome 1 of Rhodobacter sphaeroides 2.4.1.</title>
        <authorList>
            <person name="Copeland A."/>
            <person name="Lucas S."/>
            <person name="Lapidus A."/>
            <person name="Barry K."/>
            <person name="Detter J.C."/>
            <person name="Glavina T."/>
            <person name="Hammon N."/>
            <person name="Israni S."/>
            <person name="Pitluck S."/>
            <person name="Richardson P."/>
            <person name="Mackenzie C."/>
            <person name="Choudhary M."/>
            <person name="Larimer F."/>
            <person name="Hauser L.J."/>
            <person name="Land M."/>
            <person name="Donohue T.J."/>
            <person name="Kaplan S."/>
        </authorList>
    </citation>
    <scope>NUCLEOTIDE SEQUENCE [LARGE SCALE GENOMIC DNA]</scope>
    <source>
        <strain>ATCC 17023 / DSM 158 / JCM 6121 / CCUG 31486 / LMG 2827 / NBRC 12203 / NCIMB 8253 / ATH 2.4.1.</strain>
    </source>
</reference>
<name>RLMH_CERS4</name>
<comment type="function">
    <text evidence="1">Specifically methylates the pseudouridine at position 1915 (m3Psi1915) in 23S rRNA.</text>
</comment>
<comment type="catalytic activity">
    <reaction evidence="1">
        <text>pseudouridine(1915) in 23S rRNA + S-adenosyl-L-methionine = N(3)-methylpseudouridine(1915) in 23S rRNA + S-adenosyl-L-homocysteine + H(+)</text>
        <dbReference type="Rhea" id="RHEA:42752"/>
        <dbReference type="Rhea" id="RHEA-COMP:10221"/>
        <dbReference type="Rhea" id="RHEA-COMP:10222"/>
        <dbReference type="ChEBI" id="CHEBI:15378"/>
        <dbReference type="ChEBI" id="CHEBI:57856"/>
        <dbReference type="ChEBI" id="CHEBI:59789"/>
        <dbReference type="ChEBI" id="CHEBI:65314"/>
        <dbReference type="ChEBI" id="CHEBI:74486"/>
        <dbReference type="EC" id="2.1.1.177"/>
    </reaction>
</comment>
<comment type="subunit">
    <text evidence="1">Homodimer.</text>
</comment>
<comment type="subcellular location">
    <subcellularLocation>
        <location evidence="1">Cytoplasm</location>
    </subcellularLocation>
</comment>
<comment type="similarity">
    <text evidence="1">Belongs to the RNA methyltransferase RlmH family.</text>
</comment>
<feature type="chain" id="PRO_0000260595" description="Ribosomal RNA large subunit methyltransferase H">
    <location>
        <begin position="1"/>
        <end position="155"/>
    </location>
</feature>
<feature type="binding site" evidence="1">
    <location>
        <position position="72"/>
    </location>
    <ligand>
        <name>S-adenosyl-L-methionine</name>
        <dbReference type="ChEBI" id="CHEBI:59789"/>
    </ligand>
</feature>
<feature type="binding site" evidence="1">
    <location>
        <position position="103"/>
    </location>
    <ligand>
        <name>S-adenosyl-L-methionine</name>
        <dbReference type="ChEBI" id="CHEBI:59789"/>
    </ligand>
</feature>
<feature type="binding site" evidence="1">
    <location>
        <begin position="122"/>
        <end position="127"/>
    </location>
    <ligand>
        <name>S-adenosyl-L-methionine</name>
        <dbReference type="ChEBI" id="CHEBI:59789"/>
    </ligand>
</feature>